<reference key="1">
    <citation type="journal article" date="1993" name="Proc. Natl. Acad. Sci. U.S.A.">
        <title>Genes on chromosomes 4, 9, and 19 involved in 11q23 abnormalities in acute leukemia share sequence homology and/or common motifs.</title>
        <authorList>
            <person name="Nakamura T."/>
            <person name="Alder H."/>
            <person name="Gu Y."/>
            <person name="Prasad R."/>
            <person name="Canaani O."/>
            <person name="Kamada N."/>
            <person name="Gale R.P."/>
            <person name="Lange B."/>
            <person name="Crist W.M."/>
            <person name="Nowell P.C."/>
            <person name="Croce C.M."/>
            <person name="Canaani E."/>
        </authorList>
    </citation>
    <scope>NUCLEOTIDE SEQUENCE [MRNA] (ISOFORM 1)</scope>
    <scope>CHROMOSOMAL TRANSLOCATION WITH KMT2A</scope>
</reference>
<reference key="2">
    <citation type="journal article" date="2004" name="Nat. Genet.">
        <title>Complete sequencing and characterization of 21,243 full-length human cDNAs.</title>
        <authorList>
            <person name="Ota T."/>
            <person name="Suzuki Y."/>
            <person name="Nishikawa T."/>
            <person name="Otsuki T."/>
            <person name="Sugiyama T."/>
            <person name="Irie R."/>
            <person name="Wakamatsu A."/>
            <person name="Hayashi K."/>
            <person name="Sato H."/>
            <person name="Nagai K."/>
            <person name="Kimura K."/>
            <person name="Makita H."/>
            <person name="Sekine M."/>
            <person name="Obayashi M."/>
            <person name="Nishi T."/>
            <person name="Shibahara T."/>
            <person name="Tanaka T."/>
            <person name="Ishii S."/>
            <person name="Yamamoto J."/>
            <person name="Saito K."/>
            <person name="Kawai Y."/>
            <person name="Isono Y."/>
            <person name="Nakamura Y."/>
            <person name="Nagahari K."/>
            <person name="Murakami K."/>
            <person name="Yasuda T."/>
            <person name="Iwayanagi T."/>
            <person name="Wagatsuma M."/>
            <person name="Shiratori A."/>
            <person name="Sudo H."/>
            <person name="Hosoiri T."/>
            <person name="Kaku Y."/>
            <person name="Kodaira H."/>
            <person name="Kondo H."/>
            <person name="Sugawara M."/>
            <person name="Takahashi M."/>
            <person name="Kanda K."/>
            <person name="Yokoi T."/>
            <person name="Furuya T."/>
            <person name="Kikkawa E."/>
            <person name="Omura Y."/>
            <person name="Abe K."/>
            <person name="Kamihara K."/>
            <person name="Katsuta N."/>
            <person name="Sato K."/>
            <person name="Tanikawa M."/>
            <person name="Yamazaki M."/>
            <person name="Ninomiya K."/>
            <person name="Ishibashi T."/>
            <person name="Yamashita H."/>
            <person name="Murakawa K."/>
            <person name="Fujimori K."/>
            <person name="Tanai H."/>
            <person name="Kimata M."/>
            <person name="Watanabe M."/>
            <person name="Hiraoka S."/>
            <person name="Chiba Y."/>
            <person name="Ishida S."/>
            <person name="Ono Y."/>
            <person name="Takiguchi S."/>
            <person name="Watanabe S."/>
            <person name="Yosida M."/>
            <person name="Hotuta T."/>
            <person name="Kusano J."/>
            <person name="Kanehori K."/>
            <person name="Takahashi-Fujii A."/>
            <person name="Hara H."/>
            <person name="Tanase T.-O."/>
            <person name="Nomura Y."/>
            <person name="Togiya S."/>
            <person name="Komai F."/>
            <person name="Hara R."/>
            <person name="Takeuchi K."/>
            <person name="Arita M."/>
            <person name="Imose N."/>
            <person name="Musashino K."/>
            <person name="Yuuki H."/>
            <person name="Oshima A."/>
            <person name="Sasaki N."/>
            <person name="Aotsuka S."/>
            <person name="Yoshikawa Y."/>
            <person name="Matsunawa H."/>
            <person name="Ichihara T."/>
            <person name="Shiohata N."/>
            <person name="Sano S."/>
            <person name="Moriya S."/>
            <person name="Momiyama H."/>
            <person name="Satoh N."/>
            <person name="Takami S."/>
            <person name="Terashima Y."/>
            <person name="Suzuki O."/>
            <person name="Nakagawa S."/>
            <person name="Senoh A."/>
            <person name="Mizoguchi H."/>
            <person name="Goto Y."/>
            <person name="Shimizu F."/>
            <person name="Wakebe H."/>
            <person name="Hishigaki H."/>
            <person name="Watanabe T."/>
            <person name="Sugiyama A."/>
            <person name="Takemoto M."/>
            <person name="Kawakami B."/>
            <person name="Yamazaki M."/>
            <person name="Watanabe K."/>
            <person name="Kumagai A."/>
            <person name="Itakura S."/>
            <person name="Fukuzumi Y."/>
            <person name="Fujimori Y."/>
            <person name="Komiyama M."/>
            <person name="Tashiro H."/>
            <person name="Tanigami A."/>
            <person name="Fujiwara T."/>
            <person name="Ono T."/>
            <person name="Yamada K."/>
            <person name="Fujii Y."/>
            <person name="Ozaki K."/>
            <person name="Hirao M."/>
            <person name="Ohmori Y."/>
            <person name="Kawabata A."/>
            <person name="Hikiji T."/>
            <person name="Kobatake N."/>
            <person name="Inagaki H."/>
            <person name="Ikema Y."/>
            <person name="Okamoto S."/>
            <person name="Okitani R."/>
            <person name="Kawakami T."/>
            <person name="Noguchi S."/>
            <person name="Itoh T."/>
            <person name="Shigeta K."/>
            <person name="Senba T."/>
            <person name="Matsumura K."/>
            <person name="Nakajima Y."/>
            <person name="Mizuno T."/>
            <person name="Morinaga M."/>
            <person name="Sasaki M."/>
            <person name="Togashi T."/>
            <person name="Oyama M."/>
            <person name="Hata H."/>
            <person name="Watanabe M."/>
            <person name="Komatsu T."/>
            <person name="Mizushima-Sugano J."/>
            <person name="Satoh T."/>
            <person name="Shirai Y."/>
            <person name="Takahashi Y."/>
            <person name="Nakagawa K."/>
            <person name="Okumura K."/>
            <person name="Nagase T."/>
            <person name="Nomura N."/>
            <person name="Kikuchi H."/>
            <person name="Masuho Y."/>
            <person name="Yamashita R."/>
            <person name="Nakai K."/>
            <person name="Yada T."/>
            <person name="Nakamura Y."/>
            <person name="Ohara O."/>
            <person name="Isogai T."/>
            <person name="Sugano S."/>
        </authorList>
    </citation>
    <scope>NUCLEOTIDE SEQUENCE [LARGE SCALE MRNA] (ISOFORMS 1 AND 2)</scope>
    <source>
        <tissue>Brain</tissue>
        <tissue>Synovium</tissue>
    </source>
</reference>
<reference key="3">
    <citation type="journal article" date="2004" name="Nature">
        <title>DNA sequence and analysis of human chromosome 9.</title>
        <authorList>
            <person name="Humphray S.J."/>
            <person name="Oliver K."/>
            <person name="Hunt A.R."/>
            <person name="Plumb R.W."/>
            <person name="Loveland J.E."/>
            <person name="Howe K.L."/>
            <person name="Andrews T.D."/>
            <person name="Searle S."/>
            <person name="Hunt S.E."/>
            <person name="Scott C.E."/>
            <person name="Jones M.C."/>
            <person name="Ainscough R."/>
            <person name="Almeida J.P."/>
            <person name="Ambrose K.D."/>
            <person name="Ashwell R.I.S."/>
            <person name="Babbage A.K."/>
            <person name="Babbage S."/>
            <person name="Bagguley C.L."/>
            <person name="Bailey J."/>
            <person name="Banerjee R."/>
            <person name="Barker D.J."/>
            <person name="Barlow K.F."/>
            <person name="Bates K."/>
            <person name="Beasley H."/>
            <person name="Beasley O."/>
            <person name="Bird C.P."/>
            <person name="Bray-Allen S."/>
            <person name="Brown A.J."/>
            <person name="Brown J.Y."/>
            <person name="Burford D."/>
            <person name="Burrill W."/>
            <person name="Burton J."/>
            <person name="Carder C."/>
            <person name="Carter N.P."/>
            <person name="Chapman J.C."/>
            <person name="Chen Y."/>
            <person name="Clarke G."/>
            <person name="Clark S.Y."/>
            <person name="Clee C.M."/>
            <person name="Clegg S."/>
            <person name="Collier R.E."/>
            <person name="Corby N."/>
            <person name="Crosier M."/>
            <person name="Cummings A.T."/>
            <person name="Davies J."/>
            <person name="Dhami P."/>
            <person name="Dunn M."/>
            <person name="Dutta I."/>
            <person name="Dyer L.W."/>
            <person name="Earthrowl M.E."/>
            <person name="Faulkner L."/>
            <person name="Fleming C.J."/>
            <person name="Frankish A."/>
            <person name="Frankland J.A."/>
            <person name="French L."/>
            <person name="Fricker D.G."/>
            <person name="Garner P."/>
            <person name="Garnett J."/>
            <person name="Ghori J."/>
            <person name="Gilbert J.G.R."/>
            <person name="Glison C."/>
            <person name="Grafham D.V."/>
            <person name="Gribble S."/>
            <person name="Griffiths C."/>
            <person name="Griffiths-Jones S."/>
            <person name="Grocock R."/>
            <person name="Guy J."/>
            <person name="Hall R.E."/>
            <person name="Hammond S."/>
            <person name="Harley J.L."/>
            <person name="Harrison E.S.I."/>
            <person name="Hart E.A."/>
            <person name="Heath P.D."/>
            <person name="Henderson C.D."/>
            <person name="Hopkins B.L."/>
            <person name="Howard P.J."/>
            <person name="Howden P.J."/>
            <person name="Huckle E."/>
            <person name="Johnson C."/>
            <person name="Johnson D."/>
            <person name="Joy A.A."/>
            <person name="Kay M."/>
            <person name="Keenan S."/>
            <person name="Kershaw J.K."/>
            <person name="Kimberley A.M."/>
            <person name="King A."/>
            <person name="Knights A."/>
            <person name="Laird G.K."/>
            <person name="Langford C."/>
            <person name="Lawlor S."/>
            <person name="Leongamornlert D.A."/>
            <person name="Leversha M."/>
            <person name="Lloyd C."/>
            <person name="Lloyd D.M."/>
            <person name="Lovell J."/>
            <person name="Martin S."/>
            <person name="Mashreghi-Mohammadi M."/>
            <person name="Matthews L."/>
            <person name="McLaren S."/>
            <person name="McLay K.E."/>
            <person name="McMurray A."/>
            <person name="Milne S."/>
            <person name="Nickerson T."/>
            <person name="Nisbett J."/>
            <person name="Nordsiek G."/>
            <person name="Pearce A.V."/>
            <person name="Peck A.I."/>
            <person name="Porter K.M."/>
            <person name="Pandian R."/>
            <person name="Pelan S."/>
            <person name="Phillimore B."/>
            <person name="Povey S."/>
            <person name="Ramsey Y."/>
            <person name="Rand V."/>
            <person name="Scharfe M."/>
            <person name="Sehra H.K."/>
            <person name="Shownkeen R."/>
            <person name="Sims S.K."/>
            <person name="Skuce C.D."/>
            <person name="Smith M."/>
            <person name="Steward C.A."/>
            <person name="Swarbreck D."/>
            <person name="Sycamore N."/>
            <person name="Tester J."/>
            <person name="Thorpe A."/>
            <person name="Tracey A."/>
            <person name="Tromans A."/>
            <person name="Thomas D.W."/>
            <person name="Wall M."/>
            <person name="Wallis J.M."/>
            <person name="West A.P."/>
            <person name="Whitehead S.L."/>
            <person name="Willey D.L."/>
            <person name="Williams S.A."/>
            <person name="Wilming L."/>
            <person name="Wray P.W."/>
            <person name="Young L."/>
            <person name="Ashurst J.L."/>
            <person name="Coulson A."/>
            <person name="Blocker H."/>
            <person name="Durbin R.M."/>
            <person name="Sulston J.E."/>
            <person name="Hubbard T."/>
            <person name="Jackson M.J."/>
            <person name="Bentley D.R."/>
            <person name="Beck S."/>
            <person name="Rogers J."/>
            <person name="Dunham I."/>
        </authorList>
    </citation>
    <scope>NUCLEOTIDE SEQUENCE [LARGE SCALE GENOMIC DNA]</scope>
</reference>
<reference key="4">
    <citation type="submission" date="2005-09" db="EMBL/GenBank/DDBJ databases">
        <authorList>
            <person name="Mural R.J."/>
            <person name="Istrail S."/>
            <person name="Sutton G.G."/>
            <person name="Florea L."/>
            <person name="Halpern A.L."/>
            <person name="Mobarry C.M."/>
            <person name="Lippert R."/>
            <person name="Walenz B."/>
            <person name="Shatkay H."/>
            <person name="Dew I."/>
            <person name="Miller J.R."/>
            <person name="Flanigan M.J."/>
            <person name="Edwards N.J."/>
            <person name="Bolanos R."/>
            <person name="Fasulo D."/>
            <person name="Halldorsson B.V."/>
            <person name="Hannenhalli S."/>
            <person name="Turner R."/>
            <person name="Yooseph S."/>
            <person name="Lu F."/>
            <person name="Nusskern D.R."/>
            <person name="Shue B.C."/>
            <person name="Zheng X.H."/>
            <person name="Zhong F."/>
            <person name="Delcher A.L."/>
            <person name="Huson D.H."/>
            <person name="Kravitz S.A."/>
            <person name="Mouchard L."/>
            <person name="Reinert K."/>
            <person name="Remington K.A."/>
            <person name="Clark A.G."/>
            <person name="Waterman M.S."/>
            <person name="Eichler E.E."/>
            <person name="Adams M.D."/>
            <person name="Hunkapiller M.W."/>
            <person name="Myers E.W."/>
            <person name="Venter J.C."/>
        </authorList>
    </citation>
    <scope>NUCLEOTIDE SEQUENCE [LARGE SCALE GENOMIC DNA]</scope>
</reference>
<reference key="5">
    <citation type="journal article" date="2004" name="Genome Res.">
        <title>The status, quality, and expansion of the NIH full-length cDNA project: the Mammalian Gene Collection (MGC).</title>
        <authorList>
            <consortium name="The MGC Project Team"/>
        </authorList>
    </citation>
    <scope>NUCLEOTIDE SEQUENCE [LARGE SCALE MRNA] (ISOFORM 1)</scope>
    <source>
        <tissue>Testis</tissue>
    </source>
</reference>
<reference key="6">
    <citation type="journal article" date="2000" name="Genes Dev.">
        <title>BCoR, a novel corepressor involved in BCL-6 repression.</title>
        <authorList>
            <person name="Huynh K.D."/>
            <person name="Fischle W."/>
            <person name="Verdin E."/>
            <person name="Bardwell V.J."/>
        </authorList>
    </citation>
    <scope>INTERACTION WITH BCOR</scope>
</reference>
<reference key="7">
    <citation type="journal article" date="2000" name="Hum. Mol. Genet.">
        <title>DNA structural properties of AF9 are similar to MLL and could act as recombination hot spots resulting in MLL/AF9 translocations and leukemogenesis.</title>
        <authorList>
            <person name="Strissel P.L."/>
            <person name="Strick R."/>
            <person name="Tomek R.J."/>
            <person name="Roe B.A."/>
            <person name="Rowley J.D."/>
            <person name="Zeleznik-Le N.J."/>
        </authorList>
    </citation>
    <scope>CHROMOSOMAL TRANSLOCATION</scope>
</reference>
<reference key="8">
    <citation type="journal article" date="2001" name="Oncogene">
        <title>The ENL moiety of the childhood leukemia-associated MLL-ENL oncoprotein recruits human Polycomb 3.</title>
        <authorList>
            <person name="Garcia-Cuellar M.P."/>
            <person name="Zilles O."/>
            <person name="Schreiner S.A."/>
            <person name="Birke M."/>
            <person name="Winkler T.H."/>
            <person name="Slany R.K."/>
        </authorList>
    </citation>
    <scope>INTERACTION WITH CBX8</scope>
</reference>
<reference key="9">
    <citation type="journal article" date="2005" name="Hum. Genet.">
        <title>Loss-of-function mutation of the AF9/MLLT3 gene in a girl with neuromotor development delay, cerebellar ataxia, and epilepsy.</title>
        <authorList>
            <person name="Pramparo T."/>
            <person name="Grosso S."/>
            <person name="Messa J."/>
            <person name="Zatterale A."/>
            <person name="Bonaglia M.C."/>
            <person name="Chessa L."/>
            <person name="Balestri P."/>
            <person name="Rocchi M."/>
            <person name="Zuffardi O."/>
            <person name="Giorda R."/>
        </authorList>
    </citation>
    <scope>CHROMOSOMAL TRANSLOCATION</scope>
</reference>
<reference key="10">
    <citation type="journal article" date="2008" name="Mol. Cell">
        <title>Kinase-selective enrichment enables quantitative phosphoproteomics of the kinome across the cell cycle.</title>
        <authorList>
            <person name="Daub H."/>
            <person name="Olsen J.V."/>
            <person name="Bairlein M."/>
            <person name="Gnad F."/>
            <person name="Oppermann F.S."/>
            <person name="Korner R."/>
            <person name="Greff Z."/>
            <person name="Keri G."/>
            <person name="Stemmann O."/>
            <person name="Mann M."/>
        </authorList>
    </citation>
    <scope>PHOSPHORYLATION [LARGE SCALE ANALYSIS] AT SER-294 AND SER-483</scope>
    <scope>IDENTIFICATION BY MASS SPECTROMETRY [LARGE SCALE ANALYSIS]</scope>
    <source>
        <tissue>Cervix carcinoma</tissue>
    </source>
</reference>
<reference key="11">
    <citation type="journal article" date="2008" name="Proc. Natl. Acad. Sci. U.S.A.">
        <title>A quantitative atlas of mitotic phosphorylation.</title>
        <authorList>
            <person name="Dephoure N."/>
            <person name="Zhou C."/>
            <person name="Villen J."/>
            <person name="Beausoleil S.A."/>
            <person name="Bakalarski C.E."/>
            <person name="Elledge S.J."/>
            <person name="Gygi S.P."/>
        </authorList>
    </citation>
    <scope>PHOSPHORYLATION [LARGE SCALE ANALYSIS] AT SER-288; SER-294 AND SER-483</scope>
    <scope>IDENTIFICATION BY MASS SPECTROMETRY [LARGE SCALE ANALYSIS]</scope>
    <source>
        <tissue>Cervix carcinoma</tissue>
    </source>
</reference>
<reference key="12">
    <citation type="journal article" date="2009" name="Mol. Cell. Proteomics">
        <title>Large-scale proteomics analysis of the human kinome.</title>
        <authorList>
            <person name="Oppermann F.S."/>
            <person name="Gnad F."/>
            <person name="Olsen J.V."/>
            <person name="Hornberger R."/>
            <person name="Greff Z."/>
            <person name="Keri G."/>
            <person name="Mann M."/>
            <person name="Daub H."/>
        </authorList>
    </citation>
    <scope>IDENTIFICATION BY MASS SPECTROMETRY [LARGE SCALE ANALYSIS]</scope>
</reference>
<reference key="13">
    <citation type="journal article" date="2009" name="Sci. Signal.">
        <title>Quantitative phosphoproteomic analysis of T cell receptor signaling reveals system-wide modulation of protein-protein interactions.</title>
        <authorList>
            <person name="Mayya V."/>
            <person name="Lundgren D.H."/>
            <person name="Hwang S.-I."/>
            <person name="Rezaul K."/>
            <person name="Wu L."/>
            <person name="Eng J.K."/>
            <person name="Rodionov V."/>
            <person name="Han D.K."/>
        </authorList>
    </citation>
    <scope>PHOSPHORYLATION [LARGE SCALE ANALYSIS] AT SER-412 AND SER-419</scope>
    <scope>IDENTIFICATION BY MASS SPECTROMETRY [LARGE SCALE ANALYSIS]</scope>
    <source>
        <tissue>Leukemic T-cell</tissue>
    </source>
</reference>
<reference key="14">
    <citation type="journal article" date="2010" name="Mol. Cell">
        <title>HIV-1 Tat and host AFF4 recruit two transcription elongation factors into a bifunctional complex for coordinated activation of HIV-1 transcription.</title>
        <authorList>
            <person name="He N."/>
            <person name="Liu M."/>
            <person name="Hsu J."/>
            <person name="Xue Y."/>
            <person name="Chou S."/>
            <person name="Burlingame A."/>
            <person name="Krogan N.J."/>
            <person name="Alber T."/>
            <person name="Zhou Q."/>
        </authorList>
    </citation>
    <scope>FUNCTION</scope>
    <scope>IDENTIFICATION IN THE SEC COMPLEX</scope>
</reference>
<reference key="15">
    <citation type="journal article" date="2010" name="Mol. Cell">
        <title>AFF4, a component of the ELL/P-TEFb elongation complex and a shared subunit of MLL chimeras, can link transcription elongation to leukemia.</title>
        <authorList>
            <person name="Lin C."/>
            <person name="Smith E.R."/>
            <person name="Takahashi H."/>
            <person name="Lai K.C."/>
            <person name="Martin-Brown S."/>
            <person name="Florens L."/>
            <person name="Washburn M.P."/>
            <person name="Conaway J.W."/>
            <person name="Conaway R.C."/>
            <person name="Shilatifard A."/>
        </authorList>
    </citation>
    <scope>FUNCTION</scope>
    <scope>IDENTIFICATION IN THE SEC COMPLEX</scope>
</reference>
<reference key="16">
    <citation type="journal article" date="2010" name="Sci. Signal.">
        <title>Quantitative phosphoproteomics reveals widespread full phosphorylation site occupancy during mitosis.</title>
        <authorList>
            <person name="Olsen J.V."/>
            <person name="Vermeulen M."/>
            <person name="Santamaria A."/>
            <person name="Kumar C."/>
            <person name="Miller M.L."/>
            <person name="Jensen L.J."/>
            <person name="Gnad F."/>
            <person name="Cox J."/>
            <person name="Jensen T.S."/>
            <person name="Nigg E.A."/>
            <person name="Brunak S."/>
            <person name="Mann M."/>
        </authorList>
    </citation>
    <scope>PHOSPHORYLATION [LARGE SCALE ANALYSIS] AT SER-483</scope>
    <scope>IDENTIFICATION BY MASS SPECTROMETRY [LARGE SCALE ANALYSIS]</scope>
    <source>
        <tissue>Cervix carcinoma</tissue>
    </source>
</reference>
<reference key="17">
    <citation type="journal article" date="2011" name="Mol. Cell">
        <title>The little elongation complex regulates small nuclear RNA transcription.</title>
        <authorList>
            <person name="Smith E.R."/>
            <person name="Lin C."/>
            <person name="Garrett A.S."/>
            <person name="Thornton J."/>
            <person name="Mohaghegh N."/>
            <person name="Hu D."/>
            <person name="Jackson J."/>
            <person name="Saraf A."/>
            <person name="Swanson S.K."/>
            <person name="Seidel C."/>
            <person name="Florens L."/>
            <person name="Washburn M.P."/>
            <person name="Eissenberg J.C."/>
            <person name="Shilatifard A."/>
        </authorList>
    </citation>
    <scope>IDENTIFICATION IN THE SEC COMPLEX</scope>
</reference>
<reference key="18">
    <citation type="journal article" date="2012" name="Blood">
        <title>Structural insights into inhibition of the bivalent menin-MLL interaction by small molecules in leukemia.</title>
        <authorList>
            <person name="Shi A."/>
            <person name="Murai M.J."/>
            <person name="He S."/>
            <person name="Lund G."/>
            <person name="Hartley T."/>
            <person name="Purohit T."/>
            <person name="Reddy G."/>
            <person name="Chruszcz M."/>
            <person name="Grembecka J."/>
            <person name="Cierpicki T."/>
        </authorList>
    </citation>
    <scope>INTERACTION OF FUSION PROTEIN KMT2A-MLLT3 WITH MEN1</scope>
</reference>
<reference key="19">
    <citation type="journal article" date="2012" name="Nat. Rev. Mol. Cell Biol.">
        <title>The super elongation complex (SEC) family in transcriptional control.</title>
        <authorList>
            <person name="Luo Z."/>
            <person name="Lin C."/>
            <person name="Shilatifard A."/>
        </authorList>
    </citation>
    <scope>REVIEW ON THE SUPER ELONGATION COMPLEX</scope>
</reference>
<reference key="20">
    <citation type="journal article" date="2012" name="PLoS ONE">
        <title>Human ALKBH4 interacts with proteins associated with transcription.</title>
        <authorList>
            <person name="Bjornstad L.G."/>
            <person name="Meza T.J."/>
            <person name="Otterlei M."/>
            <person name="Olafsrud S.M."/>
            <person name="Meza-Zepeda L.A."/>
            <person name="Falnes P.O."/>
        </authorList>
    </citation>
    <scope>INTERACTION WITH ALKBH4</scope>
</reference>
<reference key="21">
    <citation type="journal article" date="2013" name="J. Proteome Res.">
        <title>Toward a comprehensive characterization of a human cancer cell phosphoproteome.</title>
        <authorList>
            <person name="Zhou H."/>
            <person name="Di Palma S."/>
            <person name="Preisinger C."/>
            <person name="Peng M."/>
            <person name="Polat A.N."/>
            <person name="Heck A.J."/>
            <person name="Mohammed S."/>
        </authorList>
    </citation>
    <scope>PHOSPHORYLATION [LARGE SCALE ANALYSIS] AT SER-294 AND SER-483</scope>
    <scope>IDENTIFICATION BY MASS SPECTROMETRY [LARGE SCALE ANALYSIS]</scope>
    <source>
        <tissue>Cervix carcinoma</tissue>
    </source>
</reference>
<reference key="22">
    <citation type="journal article" date="2014" name="Blood">
        <title>The same site on the integrase-binding domain of lens epithelium-derived growth factor is a therapeutic target for MLL leukemia and HIV.</title>
        <authorList>
            <person name="Murai M.J."/>
            <person name="Pollock J."/>
            <person name="He S."/>
            <person name="Miao H."/>
            <person name="Purohit T."/>
            <person name="Yokom A."/>
            <person name="Hess J.L."/>
            <person name="Muntean A.G."/>
            <person name="Grembecka J."/>
            <person name="Cierpicki T."/>
        </authorList>
    </citation>
    <scope>INTERACTION OF FUSION PROTEIN KMT2A-MLLT3 WITH PSIP1 AND MEN1</scope>
</reference>
<reference key="23">
    <citation type="journal article" date="2014" name="Nat. Struct. Mol. Biol.">
        <title>Uncovering global SUMOylation signaling networks in a site-specific manner.</title>
        <authorList>
            <person name="Hendriks I.A."/>
            <person name="D'Souza R.C."/>
            <person name="Yang B."/>
            <person name="Verlaan-de Vries M."/>
            <person name="Mann M."/>
            <person name="Vertegaal A.C."/>
        </authorList>
    </citation>
    <scope>SUMOYLATION [LARGE SCALE ANALYSIS] AT LYS-339</scope>
    <scope>IDENTIFICATION BY MASS SPECTROMETRY [LARGE SCALE ANALYSIS]</scope>
</reference>
<reference key="24">
    <citation type="journal article" date="2017" name="Nat. Struct. Mol. Biol.">
        <title>Site-specific mapping of the human SUMO proteome reveals co-modification with phosphorylation.</title>
        <authorList>
            <person name="Hendriks I.A."/>
            <person name="Lyon D."/>
            <person name="Young C."/>
            <person name="Jensen L.J."/>
            <person name="Vertegaal A.C."/>
            <person name="Nielsen M.L."/>
        </authorList>
    </citation>
    <scope>SUMOYLATION [LARGE SCALE ANALYSIS] AT LYS-339</scope>
    <scope>IDENTIFICATION BY MASS SPECTROMETRY [LARGE SCALE ANALYSIS]</scope>
</reference>
<reference key="25">
    <citation type="journal article" date="2019" name="Nature">
        <title>MLLT3 governs human haematopoietic stem-cell self-renewal and engraftment.</title>
        <authorList>
            <person name="Calvanese V."/>
            <person name="Nguyen A.T."/>
            <person name="Bolan T.J."/>
            <person name="Vavilina A."/>
            <person name="Su T."/>
            <person name="Lee L.K."/>
            <person name="Wang Y."/>
            <person name="Lay F.D."/>
            <person name="Magnusson M."/>
            <person name="Crooks G.M."/>
            <person name="Kurdistani S.K."/>
            <person name="Mikkola H.K.A."/>
        </authorList>
    </citation>
    <scope>FUNCTION</scope>
    <scope>TISSUE SPECIFICITY</scope>
</reference>
<reference key="26">
    <citation type="journal article" date="2018" name="Cell Rep.">
        <title>Positive Regulation of Transcription by Human ZMYND8 through Its Association with P-TEFb Complex.</title>
        <authorList>
            <person name="Ghosh K."/>
            <person name="Tang M."/>
            <person name="Kumari N."/>
            <person name="Nandy A."/>
            <person name="Basu S."/>
            <person name="Mall D.P."/>
            <person name="Rai K."/>
            <person name="Biswas D."/>
        </authorList>
    </citation>
    <scope>INTERACTION WITH CDK9</scope>
    <scope>IDENTIFICATION BY MASS SPECTROMETRY</scope>
</reference>
<reference evidence="28" key="27">
    <citation type="journal article" date="2013" name="Structure">
        <title>Leukemia fusion target AF9 is an intrinsically disordered transcriptional regulator that recruits multiple partners via coupled folding and binding.</title>
        <authorList>
            <person name="Leach B.I."/>
            <person name="Kuntimaddi A."/>
            <person name="Schmidt C.R."/>
            <person name="Cierpicki T."/>
            <person name="Johnson S.A."/>
            <person name="Bushweller J.H."/>
        </authorList>
    </citation>
    <scope>STRUCTURE BY NMR OF 490-568 IN COMPLEX WITH AFF1</scope>
</reference>
<reference evidence="31" key="28">
    <citation type="journal article" date="2014" name="Cell">
        <title>AF9 YEATS domain links histone acetylation to DOT1L-mediated H3K79 methylation.</title>
        <authorList>
            <person name="Li Y."/>
            <person name="Wen H."/>
            <person name="Xi Y."/>
            <person name="Tanaka K."/>
            <person name="Wang H."/>
            <person name="Peng D."/>
            <person name="Ren Y."/>
            <person name="Jin Q."/>
            <person name="Dent S.Y."/>
            <person name="Li W."/>
            <person name="Li H."/>
            <person name="Shi X."/>
        </authorList>
    </citation>
    <scope>X-RAY CRYSTALLOGRAPHY (2.30 ANGSTROMS) OF 1-138 IN COMPLEX WITH H3K9AC PEPTIDE</scope>
    <scope>FUNCTION</scope>
    <scope>SUBCELLULAR LOCATION</scope>
    <scope>DOMAIN</scope>
    <scope>MUTAGENESIS OF PHE-28; HIS-56; SER-58; PHE-59; GLY-77; TYR-78; PHE-81 AND ASP-103</scope>
</reference>
<reference evidence="32 33" key="29">
    <citation type="journal article" date="2016" name="Mol. Cell">
        <title>Molecular coupling of histone crotonylation and active transcription by AF9 YEATS domain.</title>
        <authorList>
            <person name="Li Y."/>
            <person name="Sabari B.R."/>
            <person name="Panchenko T."/>
            <person name="Wen H."/>
            <person name="Zhao D."/>
            <person name="Guan H."/>
            <person name="Wan L."/>
            <person name="Huang H."/>
            <person name="Tang Z."/>
            <person name="Zhao Y."/>
            <person name="Roeder R.G."/>
            <person name="Shi X."/>
            <person name="Allis C.D."/>
            <person name="Li H."/>
        </authorList>
    </citation>
    <scope>X-RAY CRYSTALLOGRAPHY (2.70 ANGSTROMS) OF 1-138 IN COMPLEX WITH H3K9CR PEPTIDE</scope>
    <scope>FUNCTION</scope>
    <scope>SUBCELLULAR LOCATION</scope>
    <scope>DOMAIN</scope>
    <scope>MUTAGENESIS OF PHE-28; HIS-56; SER-58; PHE-59; GLY-77 AND TYR-78</scope>
</reference>
<reference evidence="29 30" key="30">
    <citation type="journal article" date="2016" name="Structure">
        <title>Structural insights into histone crotonyl-lysine recognition by the AF9 YEATS domain.</title>
        <authorList>
            <person name="Zhang Q."/>
            <person name="Zeng L."/>
            <person name="Zhao C."/>
            <person name="Ju Y."/>
            <person name="Konuma T."/>
            <person name="Zhou M.M."/>
        </authorList>
    </citation>
    <scope>STRUCTURE BY NMR OF 1-138</scope>
    <scope>FUNCTION</scope>
    <scope>DOMAIN</scope>
    <scope>MUTAGENESIS OF PHE-59 AND TYR-78</scope>
</reference>
<reference evidence="34" key="31">
    <citation type="journal article" date="2018" name="Nat. Chem. Biol.">
        <title>Structure-guided development of YEATS domain inhibitors by targeting pi-pi-pi stacking.</title>
        <authorList>
            <person name="Li X."/>
            <person name="Li X.M."/>
            <person name="Jiang Y."/>
            <person name="Liu Z."/>
            <person name="Cui Y."/>
            <person name="Fung K.Y."/>
            <person name="van der Beelen S.H.E."/>
            <person name="Tian G."/>
            <person name="Wan L."/>
            <person name="Shi X."/>
            <person name="Allis C.D."/>
            <person name="Li H."/>
            <person name="Li Y."/>
            <person name="Li X.D."/>
        </authorList>
    </citation>
    <scope>X-RAY CRYSTALLOGRAPHY (1.90 ANGSTROMS) OF 1-138 IN COMPLEX WITH INHIBITOR</scope>
    <scope>FUNCTION</scope>
    <scope>DOMAIN</scope>
    <scope>ACTIVITY REGULATION</scope>
</reference>
<reference evidence="35 36" key="32">
    <citation type="journal article" date="2018" name="Nat. Commun.">
        <title>Structural insights into the pi-pi-pi stacking mechanism and DNA-binding activity of the YEATS domain.</title>
        <authorList>
            <person name="Klein B.J."/>
            <person name="Vann K.R."/>
            <person name="Andrews F.H."/>
            <person name="Wang W.W."/>
            <person name="Zhang J."/>
            <person name="Zhang Y."/>
            <person name="Beloglazkina A.A."/>
            <person name="Mi W."/>
            <person name="Li Y."/>
            <person name="Li H."/>
            <person name="Shi X."/>
            <person name="Kutateladze A.G."/>
            <person name="Strahl B.D."/>
            <person name="Liu W.R."/>
            <person name="Kutateladze T.G."/>
        </authorList>
    </citation>
    <scope>X-RAY CRYSTALLOGRAPHY (1.93 ANGSTROMS) OF 1-138 IN COMPLEX WITH H3K9CR PEPTIDE</scope>
    <scope>FUNCTION</scope>
    <scope>DOMAIN</scope>
    <scope>MUTAGENESIS OF 61-ARG--LYS-67; 78-TYR-ALA-79 AND TYR-78</scope>
</reference>
<sequence>MASSCAVQVKLELGHRAQVRKKPTVEGFTHDWMVFVRGPEHSNIQHFVEKVVFHLHESFPRPKRVCKDPPYKVEESGYAGFILPIEVYFKNKEEPRKVRFDYDLFLHLEGHPPVNHLRCEKLTFNNPTEDFRRKLLKAGGDPNRSIHTSSSSSSSSSSSSSSSSSSSSSSSSSSSSSSSSSSSSSSSSSSTSFSKPHKLMKEHKEKPSKDSREHKSAFKEPSRDHNKSSKESSKKPKENKPLKEEKIVPKMAFKEPKPMSKEPKPDSNLLTITSGQDKKAPSKRPPISDSEELSAKKRKKSSSEALFKSFSSAPPLILTCSADKKQIKDKSHVKMGKVKIESETSEKKKSTLPPFDDIVDPNDSDVEENISSKSDSEQPSPASSSSSSSSSFTPSQTRQQGPLRSIMKDLHSDDNEEESDEVEDNDNDSEMERPVNRGGSRSRRVSLSDGSDSESSSASSPLHHEPPPPLLKTNNNQILEVKSPIKQSKSDKQIKNGECDKAYLDELVELHRRLMTLRERHILQQIVNLIEETGHFHITNTTFDFDLCSLDKTTVRKLQSYLETSGTS</sequence>
<name>AF9_HUMAN</name>
<evidence type="ECO:0000255" key="1"/>
<evidence type="ECO:0000255" key="2">
    <source>
        <dbReference type="PROSITE-ProRule" id="PRU00376"/>
    </source>
</evidence>
<evidence type="ECO:0000256" key="3">
    <source>
        <dbReference type="SAM" id="MobiDB-lite"/>
    </source>
</evidence>
<evidence type="ECO:0000269" key="4">
    <source>
    </source>
</evidence>
<evidence type="ECO:0000269" key="5">
    <source>
    </source>
</evidence>
<evidence type="ECO:0000269" key="6">
    <source>
    </source>
</evidence>
<evidence type="ECO:0000269" key="7">
    <source>
    </source>
</evidence>
<evidence type="ECO:0000269" key="8">
    <source>
    </source>
</evidence>
<evidence type="ECO:0000269" key="9">
    <source>
    </source>
</evidence>
<evidence type="ECO:0000269" key="10">
    <source>
    </source>
</evidence>
<evidence type="ECO:0000269" key="11">
    <source>
    </source>
</evidence>
<evidence type="ECO:0000269" key="12">
    <source>
    </source>
</evidence>
<evidence type="ECO:0000269" key="13">
    <source>
    </source>
</evidence>
<evidence type="ECO:0000269" key="14">
    <source>
    </source>
</evidence>
<evidence type="ECO:0000269" key="15">
    <source>
    </source>
</evidence>
<evidence type="ECO:0000269" key="16">
    <source>
    </source>
</evidence>
<evidence type="ECO:0000269" key="17">
    <source>
    </source>
</evidence>
<evidence type="ECO:0000269" key="18">
    <source>
    </source>
</evidence>
<evidence type="ECO:0000269" key="19">
    <source>
    </source>
</evidence>
<evidence type="ECO:0000269" key="20">
    <source>
    </source>
</evidence>
<evidence type="ECO:0000269" key="21">
    <source>
    </source>
</evidence>
<evidence type="ECO:0000269" key="22">
    <source>
    </source>
</evidence>
<evidence type="ECO:0000303" key="23">
    <source>
    </source>
</evidence>
<evidence type="ECO:0000303" key="24">
    <source>
    </source>
</evidence>
<evidence type="ECO:0000303" key="25">
    <source>
    </source>
</evidence>
<evidence type="ECO:0000305" key="26"/>
<evidence type="ECO:0000312" key="27">
    <source>
        <dbReference type="HGNC" id="HGNC:7136"/>
    </source>
</evidence>
<evidence type="ECO:0007744" key="28">
    <source>
        <dbReference type="PDB" id="2LM0"/>
    </source>
</evidence>
<evidence type="ECO:0007744" key="29">
    <source>
        <dbReference type="PDB" id="2NDF"/>
    </source>
</evidence>
<evidence type="ECO:0007744" key="30">
    <source>
        <dbReference type="PDB" id="2NDG"/>
    </source>
</evidence>
<evidence type="ECO:0007744" key="31">
    <source>
        <dbReference type="PDB" id="4TMP"/>
    </source>
</evidence>
<evidence type="ECO:0007744" key="32">
    <source>
        <dbReference type="PDB" id="5HJB"/>
    </source>
</evidence>
<evidence type="ECO:0007744" key="33">
    <source>
        <dbReference type="PDB" id="5HJD"/>
    </source>
</evidence>
<evidence type="ECO:0007744" key="34">
    <source>
        <dbReference type="PDB" id="5YYF"/>
    </source>
</evidence>
<evidence type="ECO:0007744" key="35">
    <source>
        <dbReference type="PDB" id="6MIL"/>
    </source>
</evidence>
<evidence type="ECO:0007744" key="36">
    <source>
        <dbReference type="PDB" id="6MIM"/>
    </source>
</evidence>
<evidence type="ECO:0007744" key="37">
    <source>
    </source>
</evidence>
<evidence type="ECO:0007744" key="38">
    <source>
    </source>
</evidence>
<evidence type="ECO:0007744" key="39">
    <source>
    </source>
</evidence>
<evidence type="ECO:0007744" key="40">
    <source>
    </source>
</evidence>
<evidence type="ECO:0007744" key="41">
    <source>
    </source>
</evidence>
<evidence type="ECO:0007744" key="42">
    <source>
    </source>
</evidence>
<evidence type="ECO:0007744" key="43">
    <source>
    </source>
</evidence>
<evidence type="ECO:0007829" key="44">
    <source>
        <dbReference type="PDB" id="2LM0"/>
    </source>
</evidence>
<evidence type="ECO:0007829" key="45">
    <source>
        <dbReference type="PDB" id="5YYF"/>
    </source>
</evidence>
<evidence type="ECO:0007829" key="46">
    <source>
        <dbReference type="PDB" id="8PJ7"/>
    </source>
</evidence>
<comment type="function">
    <text evidence="8 9 15 16 17 19 20 21">Chromatin reader component of the super elongation complex (SEC), a complex required to increase the catalytic rate of RNA polymerase II transcription by suppressing transient pausing by the polymerase at multiple sites along the DNA (PubMed:20159561, PubMed:20471948, PubMed:25417107, PubMed:27105114, PubMed:27545619). Specifically recognizes and binds acylated histone H3, with a preference for histone H3 that is crotonylated (PubMed:25417107, PubMed:27105114, PubMed:27545619, PubMed:30374167, PubMed:30385749). Crotonylation marks active promoters and enhancers and confers resistance to transcriptional repressors (PubMed:25417107, PubMed:27105114, PubMed:27545619). Recognizes and binds histone H3 crotonylated at 'Lys-9' (H3K9cr), and with slightly lower affinity histone H3 crotonylated at 'Lys-18' (H3K18cr) (PubMed:27105114). Also recognizes and binds histone H3 acetylated and butyrylated at 'Lys-9' (H3K9ac and H3K9bu, respectively), but with lower affinity than crotonylated histone H3 (PubMed:25417107, PubMed:27105114, PubMed:30385749). In the SEC complex, MLLT3 is required to recruit the complex to crotonylated histones (PubMed:27105114, PubMed:27545619). Recruitment of the SEC complex to crotonylated histones promotes recruitment of DOT1L on active chromatin to deposit histone H3 'Lys-79' methylation (H3K79me) (PubMed:25417107). Plays a key role in hematopoietic stem cell (HSC) maintenance by preserving, rather than conferring, HSC stemness (PubMed:31776511). Acts by binding to the transcription start site of active genes in HSCs and sustaining level of H3K79me2, probably by recruiting DOT1L (PubMed:31776511).</text>
</comment>
<comment type="activity regulation">
    <text evidence="19">Crotonylated lysine binding is strongly inhibited by the peptide XL-07i, carrying a 2-furancarbonyl side chain and capped with a hydrophobic carboxybenzyl group (PubMed:30374167). XL-07i targets the unique pi-pi-pi stacking interaction at the crotonylation recognition site (PubMed:30374167).</text>
</comment>
<comment type="subunit">
    <text evidence="5 6 8 9 10 12 13 15 18">Component of the super elongation complex (SEC), at least composed of EAF1, EAF2, CDK9, MLLT3/AF9, AFF (AFF1 or AFF4), the P-TEFb complex and ELL (ELL, ELL2 or ELL3) (PubMed:20159561, PubMed:20471948, PubMed:22195968, PubMed:23260655, PubMed:25417107, PubMed:30134174). Interacts with BCOR (PubMed:10898795). Interacts with CBX8 (PubMed:11313972). Interacts with ALKBH4 (PubMed:23145062).</text>
</comment>
<comment type="interaction">
    <interactant intactId="EBI-716132">
        <id>P42568</id>
    </interactant>
    <interactant intactId="EBI-2610180">
        <id>P51825</id>
        <label>AFF1</label>
    </interactant>
    <organismsDiffer>false</organismsDiffer>
    <experiments>7</experiments>
</comment>
<comment type="interaction">
    <interactant intactId="EBI-716132">
        <id>P42568</id>
    </interactant>
    <interactant intactId="EBI-395282">
        <id>Q9UHB7</id>
        <label>AFF4</label>
    </interactant>
    <organismsDiffer>false</organismsDiffer>
    <experiments>4</experiments>
</comment>
<comment type="interaction">
    <interactant intactId="EBI-716132">
        <id>P42568</id>
    </interactant>
    <interactant intactId="EBI-8637516">
        <id>Q9NXW9</id>
        <label>ALKBH4</label>
    </interactant>
    <organismsDiffer>false</organismsDiffer>
    <experiments>5</experiments>
</comment>
<comment type="interaction">
    <interactant intactId="EBI-716132">
        <id>P42568</id>
    </interactant>
    <interactant intactId="EBI-743771">
        <id>Q92624</id>
        <label>APPBP2</label>
    </interactant>
    <organismsDiffer>false</organismsDiffer>
    <experiments>4</experiments>
</comment>
<comment type="interaction">
    <interactant intactId="EBI-716132">
        <id>P42568</id>
    </interactant>
    <interactant intactId="EBI-16028932">
        <id>Q6W2J9-1</id>
        <label>BCOR</label>
    </interactant>
    <organismsDiffer>false</organismsDiffer>
    <experiments>2</experiments>
</comment>
<comment type="interaction">
    <interactant intactId="EBI-716132">
        <id>P42568</id>
    </interactant>
    <interactant intactId="EBI-712912">
        <id>Q9HC52</id>
        <label>CBX8</label>
    </interactant>
    <organismsDiffer>false</organismsDiffer>
    <experiments>2</experiments>
</comment>
<comment type="interaction">
    <interactant intactId="EBI-716132">
        <id>P42568</id>
    </interactant>
    <interactant intactId="EBI-2619253">
        <id>Q8TEK3</id>
        <label>DOT1L</label>
    </interactant>
    <organismsDiffer>false</organismsDiffer>
    <experiments>6</experiments>
</comment>
<comment type="interaction">
    <interactant intactId="EBI-716132">
        <id>P42568</id>
    </interactant>
    <interactant intactId="EBI-8468186">
        <id>Q8IZU1</id>
        <label>FAM9A</label>
    </interactant>
    <organismsDiffer>false</organismsDiffer>
    <experiments>5</experiments>
</comment>
<comment type="interaction">
    <interactant intactId="EBI-716132">
        <id>P42568</id>
    </interactant>
    <interactant intactId="EBI-2801965">
        <id>Q5JXC2</id>
        <label>MIIP</label>
    </interactant>
    <organismsDiffer>false</organismsDiffer>
    <experiments>4</experiments>
</comment>
<comment type="interaction">
    <interactant intactId="EBI-716132">
        <id>P42568</id>
    </interactant>
    <interactant intactId="EBI-12227803">
        <id>Q5SQQ9-2</id>
        <label>VAX1</label>
    </interactant>
    <organismsDiffer>false</organismsDiffer>
    <experiments>3</experiments>
</comment>
<comment type="interaction">
    <interactant intactId="EBI-716132">
        <id>P42568</id>
    </interactant>
    <interactant intactId="EBI-10172590">
        <id>Q7Z3I7</id>
        <label>ZNF572</label>
    </interactant>
    <organismsDiffer>false</organismsDiffer>
    <experiments>3</experiments>
</comment>
<comment type="subcellular location">
    <subcellularLocation>
        <location evidence="2 16">Nucleus</location>
    </subcellularLocation>
    <subcellularLocation>
        <location evidence="15 16">Chromosome</location>
    </subcellularLocation>
    <text evidence="15 16">Colocalizes with acylated histone H3 (PubMed:25417107, PubMed:27105114). Colocalizes with histone H3 crotonylated at 'Lys-18' (H3K18cr) (PubMed:27105114).</text>
</comment>
<comment type="alternative products">
    <event type="alternative splicing"/>
    <isoform>
        <id>P42568-1</id>
        <name>1</name>
        <sequence type="displayed"/>
    </isoform>
    <isoform>
        <id>P42568-2</id>
        <name>2</name>
        <sequence type="described" ref="VSP_054924"/>
    </isoform>
</comment>
<comment type="tissue specificity">
    <text evidence="21">Enriched in undifferentiated hematopoietic stem cells in fetal liver, cord blood and bone marrow.</text>
</comment>
<comment type="domain">
    <text evidence="15 16 17 19 20">The YEATS domain specifically recognizes and binds acylated histones, with a marked preference for histones that are crotonylated (PubMed:27105114, PubMed:27545619). Also binds histone H3 acetylated at 'Lys-9' (H3K9ac), but with lower affinity (PubMed:25417107, PubMed:27105114). Binds crotonylated lysine through a non-canonical pi-pi-pi stacking mechanism (PubMed:30374167, PubMed:30385749). The YEATS domain also binds DNA (PubMed:30385749).</text>
</comment>
<comment type="disease">
    <text evidence="4 11 14 22">A chromosomal aberration involving MLLT3 is associated with acute leukemias. Translocation t(9;11)(p22;q23) with KMT2A/MLL1. The result is a rogue activator protein. Fusion protein KMT2A-MLLT3 interacts with MEN1 and PSIP1 (PubMed:22936661, PubMed:25305204).</text>
</comment>
<comment type="disease">
    <text evidence="7">A chromosomal aberration involving MLLT3 was observed in a patient with neuromotor development delay, cerebellar ataxia and epilepsy. Translocation t(4;9)(q35;p22).</text>
</comment>
<comment type="online information" name="Atlas of Genetics and Cytogenetics in Oncology and Haematology">
    <link uri="https://atlasgeneticsoncology.org/gene/5/mllt3"/>
</comment>
<dbReference type="EMBL" id="L13744">
    <property type="protein sequence ID" value="AAA58361.1"/>
    <property type="molecule type" value="mRNA"/>
</dbReference>
<dbReference type="EMBL" id="AK301474">
    <property type="protein sequence ID" value="BAH13491.1"/>
    <property type="molecule type" value="mRNA"/>
</dbReference>
<dbReference type="EMBL" id="AK312914">
    <property type="protein sequence ID" value="BAG35760.1"/>
    <property type="molecule type" value="mRNA"/>
</dbReference>
<dbReference type="EMBL" id="AL354879">
    <property type="status" value="NOT_ANNOTATED_CDS"/>
    <property type="molecule type" value="Genomic_DNA"/>
</dbReference>
<dbReference type="EMBL" id="AL512635">
    <property type="status" value="NOT_ANNOTATED_CDS"/>
    <property type="molecule type" value="Genomic_DNA"/>
</dbReference>
<dbReference type="EMBL" id="AL513498">
    <property type="status" value="NOT_ANNOTATED_CDS"/>
    <property type="molecule type" value="Genomic_DNA"/>
</dbReference>
<dbReference type="EMBL" id="AL163193">
    <property type="status" value="NOT_ANNOTATED_CDS"/>
    <property type="molecule type" value="Genomic_DNA"/>
</dbReference>
<dbReference type="EMBL" id="AL627410">
    <property type="status" value="NOT_ANNOTATED_CDS"/>
    <property type="molecule type" value="Genomic_DNA"/>
</dbReference>
<dbReference type="EMBL" id="CH471071">
    <property type="protein sequence ID" value="EAW58631.1"/>
    <property type="molecule type" value="Genomic_DNA"/>
</dbReference>
<dbReference type="EMBL" id="CH471071">
    <property type="protein sequence ID" value="EAW58632.1"/>
    <property type="molecule type" value="Genomic_DNA"/>
</dbReference>
<dbReference type="EMBL" id="BC036089">
    <property type="protein sequence ID" value="AAH36089.1"/>
    <property type="molecule type" value="mRNA"/>
</dbReference>
<dbReference type="CCDS" id="CCDS6494.1">
    <molecule id="P42568-1"/>
</dbReference>
<dbReference type="CCDS" id="CCDS69579.1">
    <molecule id="P42568-2"/>
</dbReference>
<dbReference type="PIR" id="I39411">
    <property type="entry name" value="I39411"/>
</dbReference>
<dbReference type="RefSeq" id="NP_001273620.1">
    <molecule id="P42568-2"/>
    <property type="nucleotide sequence ID" value="NM_001286691.2"/>
</dbReference>
<dbReference type="RefSeq" id="NP_004520.2">
    <molecule id="P42568-1"/>
    <property type="nucleotide sequence ID" value="NM_004529.4"/>
</dbReference>
<dbReference type="PDB" id="2LM0">
    <property type="method" value="NMR"/>
    <property type="chains" value="A=490-568"/>
</dbReference>
<dbReference type="PDB" id="2MV7">
    <property type="method" value="NMR"/>
    <property type="chains" value="A=500-568"/>
</dbReference>
<dbReference type="PDB" id="2N4Q">
    <property type="method" value="NMR"/>
    <property type="chains" value="B=500-568"/>
</dbReference>
<dbReference type="PDB" id="2NDF">
    <property type="method" value="NMR"/>
    <property type="chains" value="A=1-138"/>
</dbReference>
<dbReference type="PDB" id="2NDG">
    <property type="method" value="NMR"/>
    <property type="chains" value="A=1-138"/>
</dbReference>
<dbReference type="PDB" id="4TMP">
    <property type="method" value="X-ray"/>
    <property type="resolution" value="2.30 A"/>
    <property type="chains" value="A/C=1-138"/>
</dbReference>
<dbReference type="PDB" id="5HJB">
    <property type="method" value="X-ray"/>
    <property type="resolution" value="2.70 A"/>
    <property type="chains" value="A=1-138"/>
</dbReference>
<dbReference type="PDB" id="5HJD">
    <property type="method" value="X-ray"/>
    <property type="resolution" value="2.81 A"/>
    <property type="chains" value="A/C/E/G/K/N/Q/T=1-138"/>
</dbReference>
<dbReference type="PDB" id="5YYF">
    <property type="method" value="X-ray"/>
    <property type="resolution" value="1.90 A"/>
    <property type="chains" value="A/C=1-138"/>
</dbReference>
<dbReference type="PDB" id="6B7G">
    <property type="method" value="NMR"/>
    <property type="chains" value="A=500-568"/>
</dbReference>
<dbReference type="PDB" id="6L5Z">
    <property type="method" value="X-ray"/>
    <property type="resolution" value="3.05 A"/>
    <property type="chains" value="A=1-138"/>
</dbReference>
<dbReference type="PDB" id="6LS6">
    <property type="method" value="X-ray"/>
    <property type="resolution" value="2.20 A"/>
    <property type="chains" value="A/B=1-138"/>
</dbReference>
<dbReference type="PDB" id="6MIL">
    <property type="method" value="X-ray"/>
    <property type="resolution" value="1.93 A"/>
    <property type="chains" value="A/C=1-138"/>
</dbReference>
<dbReference type="PDB" id="6MIM">
    <property type="method" value="X-ray"/>
    <property type="resolution" value="2.52 A"/>
    <property type="chains" value="A/C=1-138"/>
</dbReference>
<dbReference type="PDB" id="7EIC">
    <property type="method" value="X-ray"/>
    <property type="resolution" value="1.95 A"/>
    <property type="chains" value="A/B=1-138"/>
</dbReference>
<dbReference type="PDB" id="7EID">
    <property type="method" value="X-ray"/>
    <property type="resolution" value="2.00 A"/>
    <property type="chains" value="A/B=1-138"/>
</dbReference>
<dbReference type="PDB" id="7VKG">
    <property type="method" value="X-ray"/>
    <property type="resolution" value="1.83 A"/>
    <property type="chains" value="A=1-138"/>
</dbReference>
<dbReference type="PDB" id="7VKH">
    <property type="method" value="X-ray"/>
    <property type="resolution" value="2.25 A"/>
    <property type="chains" value="A/B=1-138"/>
</dbReference>
<dbReference type="PDB" id="8PJ7">
    <property type="method" value="X-ray"/>
    <property type="resolution" value="1.26 A"/>
    <property type="chains" value="A=1-142"/>
</dbReference>
<dbReference type="PDB" id="8TLV">
    <property type="method" value="X-ray"/>
    <property type="resolution" value="2.66 A"/>
    <property type="chains" value="A=500-568"/>
</dbReference>
<dbReference type="PDB" id="8TLW">
    <property type="method" value="X-ray"/>
    <property type="resolution" value="2.11 A"/>
    <property type="chains" value="A=500-568"/>
</dbReference>
<dbReference type="PDB" id="8TLX">
    <property type="method" value="X-ray"/>
    <property type="resolution" value="2.10 A"/>
    <property type="chains" value="A=500-568"/>
</dbReference>
<dbReference type="PDB" id="9ARO">
    <property type="method" value="X-ray"/>
    <property type="resolution" value="2.30 A"/>
    <property type="chains" value="A/B/C/D=1-138"/>
</dbReference>
<dbReference type="PDB" id="9ARR">
    <property type="method" value="X-ray"/>
    <property type="resolution" value="2.10 A"/>
    <property type="chains" value="A/B=1-138"/>
</dbReference>
<dbReference type="PDBsum" id="2LM0"/>
<dbReference type="PDBsum" id="2MV7"/>
<dbReference type="PDBsum" id="2N4Q"/>
<dbReference type="PDBsum" id="2NDF"/>
<dbReference type="PDBsum" id="2NDG"/>
<dbReference type="PDBsum" id="4TMP"/>
<dbReference type="PDBsum" id="5HJB"/>
<dbReference type="PDBsum" id="5HJD"/>
<dbReference type="PDBsum" id="5YYF"/>
<dbReference type="PDBsum" id="6B7G"/>
<dbReference type="PDBsum" id="6L5Z"/>
<dbReference type="PDBsum" id="6LS6"/>
<dbReference type="PDBsum" id="6MIL"/>
<dbReference type="PDBsum" id="6MIM"/>
<dbReference type="PDBsum" id="7EIC"/>
<dbReference type="PDBsum" id="7EID"/>
<dbReference type="PDBsum" id="7VKG"/>
<dbReference type="PDBsum" id="7VKH"/>
<dbReference type="PDBsum" id="8PJ7"/>
<dbReference type="PDBsum" id="8TLV"/>
<dbReference type="PDBsum" id="8TLW"/>
<dbReference type="PDBsum" id="8TLX"/>
<dbReference type="PDBsum" id="9ARO"/>
<dbReference type="PDBsum" id="9ARR"/>
<dbReference type="BMRB" id="P42568"/>
<dbReference type="SMR" id="P42568"/>
<dbReference type="BioGRID" id="110446">
    <property type="interactions" value="89"/>
</dbReference>
<dbReference type="CORUM" id="P42568"/>
<dbReference type="DIP" id="DIP-56409N"/>
<dbReference type="FunCoup" id="P42568">
    <property type="interactions" value="2673"/>
</dbReference>
<dbReference type="IntAct" id="P42568">
    <property type="interactions" value="69"/>
</dbReference>
<dbReference type="MINT" id="P42568"/>
<dbReference type="STRING" id="9606.ENSP00000369695"/>
<dbReference type="BindingDB" id="P42568"/>
<dbReference type="ChEMBL" id="CHEMBL4295761"/>
<dbReference type="GlyGen" id="P42568">
    <property type="glycosylation" value="1 site, 1 O-linked glycan (1 site)"/>
</dbReference>
<dbReference type="iPTMnet" id="P42568"/>
<dbReference type="PhosphoSitePlus" id="P42568"/>
<dbReference type="BioMuta" id="MLLT3"/>
<dbReference type="DMDM" id="215273971"/>
<dbReference type="jPOST" id="P42568"/>
<dbReference type="MassIVE" id="P42568"/>
<dbReference type="PaxDb" id="9606-ENSP00000369695"/>
<dbReference type="PeptideAtlas" id="P42568"/>
<dbReference type="ProteomicsDB" id="55517">
    <molecule id="P42568-1"/>
</dbReference>
<dbReference type="ProteomicsDB" id="6833"/>
<dbReference type="Pumba" id="P42568"/>
<dbReference type="Antibodypedia" id="1068">
    <property type="antibodies" value="292 antibodies from 29 providers"/>
</dbReference>
<dbReference type="DNASU" id="4300"/>
<dbReference type="Ensembl" id="ENST00000380338.9">
    <molecule id="P42568-1"/>
    <property type="protein sequence ID" value="ENSP00000369695.4"/>
    <property type="gene ID" value="ENSG00000171843.17"/>
</dbReference>
<dbReference type="Ensembl" id="ENST00000630269.2">
    <molecule id="P42568-2"/>
    <property type="protein sequence ID" value="ENSP00000485996.1"/>
    <property type="gene ID" value="ENSG00000171843.17"/>
</dbReference>
<dbReference type="GeneID" id="4300"/>
<dbReference type="KEGG" id="hsa:4300"/>
<dbReference type="MANE-Select" id="ENST00000380338.9">
    <property type="protein sequence ID" value="ENSP00000369695.4"/>
    <property type="RefSeq nucleotide sequence ID" value="NM_004529.4"/>
    <property type="RefSeq protein sequence ID" value="NP_004520.2"/>
</dbReference>
<dbReference type="UCSC" id="uc003zoe.3">
    <molecule id="P42568-1"/>
    <property type="organism name" value="human"/>
</dbReference>
<dbReference type="AGR" id="HGNC:7136"/>
<dbReference type="CTD" id="4300"/>
<dbReference type="DisGeNET" id="4300"/>
<dbReference type="GeneCards" id="MLLT3"/>
<dbReference type="HGNC" id="HGNC:7136">
    <property type="gene designation" value="MLLT3"/>
</dbReference>
<dbReference type="HPA" id="ENSG00000171843">
    <property type="expression patterns" value="Low tissue specificity"/>
</dbReference>
<dbReference type="MalaCards" id="MLLT3"/>
<dbReference type="MIM" id="159558">
    <property type="type" value="gene"/>
</dbReference>
<dbReference type="neXtProt" id="NX_P42568"/>
<dbReference type="OpenTargets" id="ENSG00000171843"/>
<dbReference type="Orphanet" id="402017">
    <property type="disease" value="Acute myeloid leukemia with t(9;11)(p22;q23)"/>
</dbReference>
<dbReference type="PharmGKB" id="PA30852"/>
<dbReference type="VEuPathDB" id="HostDB:ENSG00000171843"/>
<dbReference type="eggNOG" id="KOG3149">
    <property type="taxonomic scope" value="Eukaryota"/>
</dbReference>
<dbReference type="GeneTree" id="ENSGT00940000155903"/>
<dbReference type="InParanoid" id="P42568"/>
<dbReference type="OMA" id="MASSXCK"/>
<dbReference type="OrthoDB" id="10053467at2759"/>
<dbReference type="PAN-GO" id="P42568">
    <property type="GO annotations" value="6 GO annotations based on evolutionary models"/>
</dbReference>
<dbReference type="PhylomeDB" id="P42568"/>
<dbReference type="TreeFam" id="TF314586"/>
<dbReference type="PathwayCommons" id="P42568"/>
<dbReference type="Reactome" id="R-HSA-112382">
    <property type="pathway name" value="Formation of RNA Pol II elongation complex"/>
</dbReference>
<dbReference type="Reactome" id="R-HSA-674695">
    <property type="pathway name" value="RNA Polymerase II Pre-transcription Events"/>
</dbReference>
<dbReference type="Reactome" id="R-HSA-75955">
    <property type="pathway name" value="RNA Polymerase II Transcription Elongation"/>
</dbReference>
<dbReference type="SignaLink" id="P42568"/>
<dbReference type="SIGNOR" id="P42568"/>
<dbReference type="BioGRID-ORCS" id="4300">
    <property type="hits" value="25 hits in 1156 CRISPR screens"/>
</dbReference>
<dbReference type="ChiTaRS" id="MLLT3">
    <property type="organism name" value="human"/>
</dbReference>
<dbReference type="EvolutionaryTrace" id="P42568"/>
<dbReference type="GeneWiki" id="MLLT3"/>
<dbReference type="GenomeRNAi" id="4300"/>
<dbReference type="Pharos" id="P42568">
    <property type="development level" value="Tchem"/>
</dbReference>
<dbReference type="PRO" id="PR:P42568"/>
<dbReference type="Proteomes" id="UP000005640">
    <property type="component" value="Chromosome 9"/>
</dbReference>
<dbReference type="RNAct" id="P42568">
    <property type="molecule type" value="protein"/>
</dbReference>
<dbReference type="Bgee" id="ENSG00000171843">
    <property type="expression patterns" value="Expressed in ganglionic eminence and 167 other cell types or tissues"/>
</dbReference>
<dbReference type="ExpressionAtlas" id="P42568">
    <property type="expression patterns" value="baseline and differential"/>
</dbReference>
<dbReference type="GO" id="GO:0005694">
    <property type="term" value="C:chromosome"/>
    <property type="evidence" value="ECO:0007669"/>
    <property type="project" value="UniProtKB-SubCell"/>
</dbReference>
<dbReference type="GO" id="GO:0005829">
    <property type="term" value="C:cytosol"/>
    <property type="evidence" value="ECO:0000314"/>
    <property type="project" value="HPA"/>
</dbReference>
<dbReference type="GO" id="GO:0070062">
    <property type="term" value="C:extracellular exosome"/>
    <property type="evidence" value="ECO:0007005"/>
    <property type="project" value="UniProtKB"/>
</dbReference>
<dbReference type="GO" id="GO:0005654">
    <property type="term" value="C:nucleoplasm"/>
    <property type="evidence" value="ECO:0000314"/>
    <property type="project" value="HPA"/>
</dbReference>
<dbReference type="GO" id="GO:0005634">
    <property type="term" value="C:nucleus"/>
    <property type="evidence" value="ECO:0000304"/>
    <property type="project" value="ProtInc"/>
</dbReference>
<dbReference type="GO" id="GO:0008023">
    <property type="term" value="C:transcription elongation factor complex"/>
    <property type="evidence" value="ECO:0000314"/>
    <property type="project" value="UniProtKB"/>
</dbReference>
<dbReference type="GO" id="GO:0003682">
    <property type="term" value="F:chromatin binding"/>
    <property type="evidence" value="ECO:0000314"/>
    <property type="project" value="UniProtKB"/>
</dbReference>
<dbReference type="GO" id="GO:0003677">
    <property type="term" value="F:DNA binding"/>
    <property type="evidence" value="ECO:0007669"/>
    <property type="project" value="UniProtKB-KW"/>
</dbReference>
<dbReference type="GO" id="GO:0042393">
    <property type="term" value="F:histone binding"/>
    <property type="evidence" value="ECO:0000314"/>
    <property type="project" value="UniProtKB"/>
</dbReference>
<dbReference type="GO" id="GO:0140044">
    <property type="term" value="F:histone H3K18ac reader activity"/>
    <property type="evidence" value="ECO:0000314"/>
    <property type="project" value="GO_Central"/>
</dbReference>
<dbReference type="GO" id="GO:0140119">
    <property type="term" value="F:histone H3K27ac reader activity"/>
    <property type="evidence" value="ECO:0000314"/>
    <property type="project" value="GO_Central"/>
</dbReference>
<dbReference type="GO" id="GO:0140072">
    <property type="term" value="F:histone H3K9ac reader activity"/>
    <property type="evidence" value="ECO:0000314"/>
    <property type="project" value="UniProtKB"/>
</dbReference>
<dbReference type="GO" id="GO:0070577">
    <property type="term" value="F:lysine-acetylated histone binding"/>
    <property type="evidence" value="ECO:0000318"/>
    <property type="project" value="GO_Central"/>
</dbReference>
<dbReference type="GO" id="GO:0140030">
    <property type="term" value="F:modification-dependent protein binding"/>
    <property type="evidence" value="ECO:0000314"/>
    <property type="project" value="UniProtKB"/>
</dbReference>
<dbReference type="GO" id="GO:0060090">
    <property type="term" value="F:molecular adaptor activity"/>
    <property type="evidence" value="ECO:0000269"/>
    <property type="project" value="DisProt"/>
</dbReference>
<dbReference type="GO" id="GO:0009952">
    <property type="term" value="P:anterior/posterior pattern specification"/>
    <property type="evidence" value="ECO:0007669"/>
    <property type="project" value="Ensembl"/>
</dbReference>
<dbReference type="GO" id="GO:0010467">
    <property type="term" value="P:gene expression"/>
    <property type="evidence" value="ECO:0007669"/>
    <property type="project" value="Ensembl"/>
</dbReference>
<dbReference type="GO" id="GO:0060218">
    <property type="term" value="P:hematopoietic stem cell differentiation"/>
    <property type="evidence" value="ECO:0000314"/>
    <property type="project" value="UniProtKB"/>
</dbReference>
<dbReference type="GO" id="GO:0090090">
    <property type="term" value="P:negative regulation of canonical Wnt signaling pathway"/>
    <property type="evidence" value="ECO:0000314"/>
    <property type="project" value="MGI"/>
</dbReference>
<dbReference type="GO" id="GO:0045893">
    <property type="term" value="P:positive regulation of DNA-templated transcription"/>
    <property type="evidence" value="ECO:0000314"/>
    <property type="project" value="UniProtKB"/>
</dbReference>
<dbReference type="GO" id="GO:2000096">
    <property type="term" value="P:positive regulation of Wnt signaling pathway, planar cell polarity pathway"/>
    <property type="evidence" value="ECO:0000316"/>
    <property type="project" value="MGI"/>
</dbReference>
<dbReference type="GO" id="GO:1902275">
    <property type="term" value="P:regulation of chromatin organization"/>
    <property type="evidence" value="ECO:0000315"/>
    <property type="project" value="UniProtKB"/>
</dbReference>
<dbReference type="GO" id="GO:2000035">
    <property type="term" value="P:regulation of stem cell division"/>
    <property type="evidence" value="ECO:0000314"/>
    <property type="project" value="UniProtKB"/>
</dbReference>
<dbReference type="GO" id="GO:0007379">
    <property type="term" value="P:segment specification"/>
    <property type="evidence" value="ECO:0007669"/>
    <property type="project" value="Ensembl"/>
</dbReference>
<dbReference type="CDD" id="cd16906">
    <property type="entry name" value="YEATS_AF-9_like"/>
    <property type="match status" value="1"/>
</dbReference>
<dbReference type="DisProt" id="DP01070"/>
<dbReference type="FunFam" id="2.60.40.1970:FF:000003">
    <property type="entry name" value="MLLT1, super elongation complex subunit"/>
    <property type="match status" value="1"/>
</dbReference>
<dbReference type="FunFam" id="1.20.1270.290:FF:000001">
    <property type="entry name" value="MLLT3, super elongation complex subunit"/>
    <property type="match status" value="1"/>
</dbReference>
<dbReference type="Gene3D" id="1.20.1270.290">
    <property type="match status" value="1"/>
</dbReference>
<dbReference type="Gene3D" id="2.60.40.1970">
    <property type="entry name" value="YEATS domain"/>
    <property type="match status" value="1"/>
</dbReference>
<dbReference type="IDEAL" id="IID00552"/>
<dbReference type="InterPro" id="IPR040930">
    <property type="entry name" value="AF-9_AHD"/>
</dbReference>
<dbReference type="InterPro" id="IPR038704">
    <property type="entry name" value="YEAST_sf"/>
</dbReference>
<dbReference type="InterPro" id="IPR055129">
    <property type="entry name" value="YEATS_dom"/>
</dbReference>
<dbReference type="InterPro" id="IPR052790">
    <property type="entry name" value="YEATS_domain"/>
</dbReference>
<dbReference type="PANTHER" id="PTHR47827">
    <property type="entry name" value="AHD DOMAIN-CONTAINING PROTEIN"/>
    <property type="match status" value="1"/>
</dbReference>
<dbReference type="PANTHER" id="PTHR47827:SF5">
    <property type="entry name" value="PROTEIN AF-9"/>
    <property type="match status" value="1"/>
</dbReference>
<dbReference type="Pfam" id="PF17793">
    <property type="entry name" value="AHD"/>
    <property type="match status" value="1"/>
</dbReference>
<dbReference type="Pfam" id="PF03366">
    <property type="entry name" value="YEATS"/>
    <property type="match status" value="1"/>
</dbReference>
<dbReference type="PROSITE" id="PS51037">
    <property type="entry name" value="YEATS"/>
    <property type="match status" value="1"/>
</dbReference>
<gene>
    <name evidence="25 27" type="primary">MLLT3</name>
    <name evidence="23" type="synonym">AF9</name>
    <name type="synonym">YEATS3</name>
</gene>
<feature type="chain" id="PRO_0000215921" description="Protein AF-9">
    <location>
        <begin position="1"/>
        <end position="568"/>
    </location>
</feature>
<feature type="domain" description="YEATS" evidence="2">
    <location>
        <begin position="1"/>
        <end position="138"/>
    </location>
</feature>
<feature type="region of interest" description="Histone H3K9cr binding" evidence="16 20 32 33 35 36">
    <location>
        <begin position="78"/>
        <end position="80"/>
    </location>
</feature>
<feature type="region of interest" description="Histone H3K9cr binding" evidence="16 20 32 33 35 36">
    <location>
        <begin position="106"/>
        <end position="108"/>
    </location>
</feature>
<feature type="region of interest" description="Disordered" evidence="3">
    <location>
        <begin position="138"/>
        <end position="475"/>
    </location>
</feature>
<feature type="short sequence motif" description="Nuclear localization signal" evidence="1">
    <location>
        <begin position="295"/>
        <end position="300"/>
    </location>
</feature>
<feature type="compositionally biased region" description="Low complexity" evidence="3">
    <location>
        <begin position="149"/>
        <end position="190"/>
    </location>
</feature>
<feature type="compositionally biased region" description="Basic and acidic residues" evidence="3">
    <location>
        <begin position="202"/>
        <end position="265"/>
    </location>
</feature>
<feature type="compositionally biased region" description="Low complexity" evidence="3">
    <location>
        <begin position="303"/>
        <end position="313"/>
    </location>
</feature>
<feature type="compositionally biased region" description="Basic and acidic residues" evidence="3">
    <location>
        <begin position="322"/>
        <end position="349"/>
    </location>
</feature>
<feature type="compositionally biased region" description="Acidic residues" evidence="3">
    <location>
        <begin position="357"/>
        <end position="368"/>
    </location>
</feature>
<feature type="compositionally biased region" description="Low complexity" evidence="3">
    <location>
        <begin position="371"/>
        <end position="395"/>
    </location>
</feature>
<feature type="compositionally biased region" description="Acidic residues" evidence="3">
    <location>
        <begin position="414"/>
        <end position="429"/>
    </location>
</feature>
<feature type="compositionally biased region" description="Low complexity" evidence="3">
    <location>
        <begin position="445"/>
        <end position="461"/>
    </location>
</feature>
<feature type="site" description="Histone H3K9cr binding" evidence="16 20 32 33 35 36">
    <location>
        <position position="58"/>
    </location>
</feature>
<feature type="site" description="Histone H3K9cr binding" evidence="16 20 32 33 35 36">
    <location>
        <position position="103"/>
    </location>
</feature>
<feature type="site" description="KMT2A/MLL1 fusion point (in acute myeloid leukemia patient CO)" evidence="22">
    <location>
        <position position="375"/>
    </location>
</feature>
<feature type="site" description="KMT2A/MLL1 fusion point (in acute myeloid leukemia patient F1)" evidence="22">
    <location>
        <position position="481"/>
    </location>
</feature>
<feature type="modified residue" description="Phosphoserine" evidence="37">
    <location>
        <position position="288"/>
    </location>
</feature>
<feature type="modified residue" description="Phosphoserine" evidence="37 38 41">
    <location>
        <position position="294"/>
    </location>
</feature>
<feature type="modified residue" description="Phosphoserine" evidence="39">
    <location>
        <position position="412"/>
    </location>
</feature>
<feature type="modified residue" description="Phosphoserine" evidence="39">
    <location>
        <position position="419"/>
    </location>
</feature>
<feature type="modified residue" description="Phosphoserine" evidence="37 38 40 41">
    <location>
        <position position="483"/>
    </location>
</feature>
<feature type="cross-link" description="Glycyl lysine isopeptide (Lys-Gly) (interchain with G-Cter in SUMO2)" evidence="42 43">
    <location>
        <position position="339"/>
    </location>
</feature>
<feature type="splice variant" id="VSP_054924" description="In isoform 2." evidence="24">
    <original>MASS</original>
    <variation>M</variation>
    <location>
        <begin position="1"/>
        <end position="4"/>
    </location>
</feature>
<feature type="mutagenesis site" description="Decreased binding to crotonylated histone H3. Decreased binding to acetylated histone H3." evidence="15 16">
    <original>F</original>
    <variation>A</variation>
    <location>
        <position position="28"/>
    </location>
</feature>
<feature type="mutagenesis site" description="Decreased binding to crotonylated histone H3. Decreased binding to acetylated histone H3." evidence="15 16">
    <original>H</original>
    <variation>A</variation>
    <location>
        <position position="56"/>
    </location>
</feature>
<feature type="mutagenesis site" description="Decreased binding to crotonylated histone H3. Decreased binding to acetylated histone H3." evidence="15 16">
    <original>S</original>
    <variation>A</variation>
    <location>
        <position position="58"/>
    </location>
</feature>
<feature type="mutagenesis site" description="Strongly decreased binding to crotonylated histone H3. Decreased binding to acetylated histone H3." evidence="15 16 17">
    <original>F</original>
    <variation>A</variation>
    <location>
        <position position="59"/>
    </location>
</feature>
<feature type="mutagenesis site" description="Decreased DNA-binding." evidence="20">
    <original>RPKRVCK</original>
    <variation>EPERVCE</variation>
    <location>
        <begin position="61"/>
        <end position="67"/>
    </location>
</feature>
<feature type="mutagenesis site" description="Decreased binding to crotonylated histone H3. Decreased binding to acetylated histone H3." evidence="15 16">
    <original>G</original>
    <variation>A</variation>
    <location>
        <position position="77"/>
    </location>
</feature>
<feature type="mutagenesis site" description="Binds equally well acetylated and crotonylated histone H3." evidence="20">
    <original>YA</original>
    <variation>WG</variation>
    <location>
        <begin position="78"/>
        <end position="79"/>
    </location>
</feature>
<feature type="mutagenesis site" description="Strongly decreased binding to crotonylated histone H3. Decreased binding to acetylated histone H3." evidence="15 16 17">
    <original>Y</original>
    <variation>A</variation>
    <location>
        <position position="78"/>
    </location>
</feature>
<feature type="mutagenesis site" description="Does not affect ability to discriminate between acetylated and crotonylated histone H3." evidence="20">
    <original>Y</original>
    <variation>W</variation>
    <location>
        <position position="78"/>
    </location>
</feature>
<feature type="mutagenesis site" description="Decreased binding to acetylated histone H3." evidence="15">
    <original>F</original>
    <variation>A</variation>
    <location>
        <position position="81"/>
    </location>
</feature>
<feature type="mutagenesis site" description="Decreased binding to acetylated histone H3." evidence="15">
    <original>D</original>
    <variation>A</variation>
    <location>
        <position position="103"/>
    </location>
</feature>
<feature type="sequence conflict" description="In Ref. 1; AAA58361 and 2; BAG35760." evidence="26" ref="1 2">
    <original>A</original>
    <variation>S</variation>
    <location>
        <position position="6"/>
    </location>
</feature>
<feature type="sequence conflict" description="In Ref. 5; AAH36089." evidence="26" ref="5">
    <original>S</original>
    <variation>G</variation>
    <location>
        <position position="173"/>
    </location>
</feature>
<feature type="sequence conflict" description="In Ref. 2; BAG35760." evidence="26" ref="2">
    <original>S</original>
    <variation>P</variation>
    <location>
        <position position="419"/>
    </location>
</feature>
<feature type="strand" evidence="46">
    <location>
        <begin position="7"/>
        <end position="19"/>
    </location>
</feature>
<feature type="strand" evidence="46">
    <location>
        <begin position="30"/>
        <end position="37"/>
    </location>
</feature>
<feature type="helix" evidence="45">
    <location>
        <begin position="39"/>
        <end position="41"/>
    </location>
</feature>
<feature type="helix" evidence="46">
    <location>
        <begin position="44"/>
        <end position="46"/>
    </location>
</feature>
<feature type="strand" evidence="46">
    <location>
        <begin position="48"/>
        <end position="54"/>
    </location>
</feature>
<feature type="strand" evidence="46">
    <location>
        <begin position="59"/>
        <end position="61"/>
    </location>
</feature>
<feature type="strand" evidence="46">
    <location>
        <begin position="63"/>
        <end position="78"/>
    </location>
</feature>
<feature type="strand" evidence="46">
    <location>
        <begin position="81"/>
        <end position="90"/>
    </location>
</feature>
<feature type="strand" evidence="46">
    <location>
        <begin position="92"/>
        <end position="94"/>
    </location>
</feature>
<feature type="strand" evidence="46">
    <location>
        <begin position="96"/>
        <end position="104"/>
    </location>
</feature>
<feature type="strand" evidence="46">
    <location>
        <begin position="114"/>
        <end position="126"/>
    </location>
</feature>
<feature type="helix" evidence="46">
    <location>
        <begin position="129"/>
        <end position="137"/>
    </location>
</feature>
<feature type="helix" evidence="44">
    <location>
        <begin position="504"/>
        <end position="515"/>
    </location>
</feature>
<feature type="helix" evidence="44">
    <location>
        <begin position="523"/>
        <end position="531"/>
    </location>
</feature>
<feature type="strand" evidence="44">
    <location>
        <begin position="536"/>
        <end position="538"/>
    </location>
</feature>
<feature type="strand" evidence="44">
    <location>
        <begin position="543"/>
        <end position="545"/>
    </location>
</feature>
<feature type="turn" evidence="44">
    <location>
        <begin position="547"/>
        <end position="549"/>
    </location>
</feature>
<feature type="helix" evidence="44">
    <location>
        <begin position="552"/>
        <end position="561"/>
    </location>
</feature>
<accession>P42568</accession>
<accession>B1AMQ2</accession>
<accession>B2R7B3</accession>
<accession>B7Z755</accession>
<accession>D3DRJ8</accession>
<accession>Q8IVB0</accession>
<keyword id="KW-0002">3D-structure</keyword>
<keyword id="KW-0010">Activator</keyword>
<keyword id="KW-0025">Alternative splicing</keyword>
<keyword id="KW-0160">Chromosomal rearrangement</keyword>
<keyword id="KW-0158">Chromosome</keyword>
<keyword id="KW-0238">DNA-binding</keyword>
<keyword id="KW-1017">Isopeptide bond</keyword>
<keyword id="KW-0539">Nucleus</keyword>
<keyword id="KW-0597">Phosphoprotein</keyword>
<keyword id="KW-1267">Proteomics identification</keyword>
<keyword id="KW-0656">Proto-oncogene</keyword>
<keyword id="KW-1185">Reference proteome</keyword>
<keyword id="KW-0804">Transcription</keyword>
<keyword id="KW-0805">Transcription regulation</keyword>
<keyword id="KW-0832">Ubl conjugation</keyword>
<proteinExistence type="evidence at protein level"/>
<protein>
    <recommendedName>
        <fullName evidence="26">Protein AF-9</fullName>
    </recommendedName>
    <alternativeName>
        <fullName evidence="23">ALL1-fused gene from chromosome 9 protein</fullName>
    </alternativeName>
    <alternativeName>
        <fullName evidence="25">Myeloid/lymphoid or mixed-lineage leukemia translocated to chromosome 3 protein</fullName>
    </alternativeName>
    <alternativeName>
        <fullName>YEATS domain-containing protein 3</fullName>
    </alternativeName>
</protein>
<organism>
    <name type="scientific">Homo sapiens</name>
    <name type="common">Human</name>
    <dbReference type="NCBI Taxonomy" id="9606"/>
    <lineage>
        <taxon>Eukaryota</taxon>
        <taxon>Metazoa</taxon>
        <taxon>Chordata</taxon>
        <taxon>Craniata</taxon>
        <taxon>Vertebrata</taxon>
        <taxon>Euteleostomi</taxon>
        <taxon>Mammalia</taxon>
        <taxon>Eutheria</taxon>
        <taxon>Euarchontoglires</taxon>
        <taxon>Primates</taxon>
        <taxon>Haplorrhini</taxon>
        <taxon>Catarrhini</taxon>
        <taxon>Hominidae</taxon>
        <taxon>Homo</taxon>
    </lineage>
</organism>